<sequence length="227" mass="25598">WTAAANYVKIKVGTGKFARKTVVLSQKRTGTLKCATMEEIEAEKSLIEKSVKERMEKTIENVKASFNSIRTXRSNPDMLDKIKVEYYGTPTSLKSIAQISTPDSSSLLVNPYDKSSLKDIEKAIVNSDLGITPNNDGDVIRLSIPQLTADRRKELSKIVAKQAEEGKVALRNIRRDAIKSYDKLEKEKKLSEDNVKDLSSDLQKVIDEYIKKVDSIFKQKEKELMTV</sequence>
<organism>
    <name type="scientific">Daucus carota</name>
    <name type="common">Wild carrot</name>
    <dbReference type="NCBI Taxonomy" id="4039"/>
    <lineage>
        <taxon>Eukaryota</taxon>
        <taxon>Viridiplantae</taxon>
        <taxon>Streptophyta</taxon>
        <taxon>Embryophyta</taxon>
        <taxon>Tracheophyta</taxon>
        <taxon>Spermatophyta</taxon>
        <taxon>Magnoliopsida</taxon>
        <taxon>eudicotyledons</taxon>
        <taxon>Gunneridae</taxon>
        <taxon>Pentapetalae</taxon>
        <taxon>asterids</taxon>
        <taxon>campanulids</taxon>
        <taxon>Apiales</taxon>
        <taxon>Apiaceae</taxon>
        <taxon>Apioideae</taxon>
        <taxon>Scandiceae</taxon>
        <taxon>Daucinae</taxon>
        <taxon>Daucus</taxon>
        <taxon>Daucus sect. Daucus</taxon>
    </lineage>
</organism>
<dbReference type="EMBL" id="X72384">
    <property type="protein sequence ID" value="CAA51077.1"/>
    <property type="status" value="ALT_FRAME"/>
    <property type="molecule type" value="mRNA"/>
</dbReference>
<dbReference type="PIR" id="S32716">
    <property type="entry name" value="S32716"/>
</dbReference>
<dbReference type="GO" id="GO:0009507">
    <property type="term" value="C:chloroplast"/>
    <property type="evidence" value="ECO:0007669"/>
    <property type="project" value="UniProtKB-SubCell"/>
</dbReference>
<dbReference type="GO" id="GO:0043023">
    <property type="term" value="F:ribosomal large subunit binding"/>
    <property type="evidence" value="ECO:0007669"/>
    <property type="project" value="TreeGrafter"/>
</dbReference>
<dbReference type="GO" id="GO:0032544">
    <property type="term" value="P:plastid translation"/>
    <property type="evidence" value="ECO:0007669"/>
    <property type="project" value="TreeGrafter"/>
</dbReference>
<dbReference type="CDD" id="cd00520">
    <property type="entry name" value="RRF"/>
    <property type="match status" value="1"/>
</dbReference>
<dbReference type="FunFam" id="3.30.1360.40:FF:000001">
    <property type="entry name" value="Ribosome-recycling factor"/>
    <property type="match status" value="1"/>
</dbReference>
<dbReference type="FunFam" id="1.10.132.20:FF:000017">
    <property type="entry name" value="Ribosome-recycling factor chloroplastic"/>
    <property type="match status" value="1"/>
</dbReference>
<dbReference type="Gene3D" id="3.30.1360.40">
    <property type="match status" value="1"/>
</dbReference>
<dbReference type="Gene3D" id="1.10.132.20">
    <property type="entry name" value="Ribosome-recycling factor"/>
    <property type="match status" value="1"/>
</dbReference>
<dbReference type="HAMAP" id="MF_00040">
    <property type="entry name" value="RRF"/>
    <property type="match status" value="1"/>
</dbReference>
<dbReference type="InterPro" id="IPR002661">
    <property type="entry name" value="Ribosome_recyc_fac"/>
</dbReference>
<dbReference type="InterPro" id="IPR023584">
    <property type="entry name" value="Ribosome_recyc_fac_dom"/>
</dbReference>
<dbReference type="InterPro" id="IPR036191">
    <property type="entry name" value="RRF_sf"/>
</dbReference>
<dbReference type="NCBIfam" id="TIGR00496">
    <property type="entry name" value="frr"/>
    <property type="match status" value="1"/>
</dbReference>
<dbReference type="PANTHER" id="PTHR20982:SF3">
    <property type="entry name" value="MITOCHONDRIAL RIBOSOME RECYCLING FACTOR PSEUDO 1"/>
    <property type="match status" value="1"/>
</dbReference>
<dbReference type="PANTHER" id="PTHR20982">
    <property type="entry name" value="RIBOSOME RECYCLING FACTOR"/>
    <property type="match status" value="1"/>
</dbReference>
<dbReference type="Pfam" id="PF01765">
    <property type="entry name" value="RRF"/>
    <property type="match status" value="1"/>
</dbReference>
<dbReference type="SUPFAM" id="SSF55194">
    <property type="entry name" value="Ribosome recycling factor, RRF"/>
    <property type="match status" value="1"/>
</dbReference>
<proteinExistence type="evidence at transcript level"/>
<gene>
    <name type="primary">RRF</name>
</gene>
<evidence type="ECO:0000250" key="1"/>
<evidence type="ECO:0000255" key="2"/>
<evidence type="ECO:0000305" key="3"/>
<reference key="1">
    <citation type="submission" date="1993-03" db="EMBL/GenBank/DDBJ databases">
        <authorList>
            <person name="Schrader S."/>
            <person name="Kaldenhoff R."/>
            <person name="Richter G."/>
        </authorList>
    </citation>
    <scope>NUCLEOTIDE SEQUENCE [MRNA]</scope>
</reference>
<reference key="2">
    <citation type="journal article" date="1999" name="Proc. Natl. Acad. Sci. U.S.A.">
        <title>Plant ribosome recycling factor homologue is a chloroplastic protein and is bactericidal in Escherichia coli carrying temperature-sensitive Ribosome-recycling factor.</title>
        <authorList>
            <person name="Rolland N."/>
            <person name="Janosi L."/>
            <person name="Block M.A."/>
            <person name="Shuda M."/>
            <person name="Teyssier E."/>
            <person name="Miege C."/>
            <person name="Cheniclet C."/>
            <person name="Carde J.-P."/>
            <person name="Kaji A."/>
            <person name="Joyard J."/>
        </authorList>
    </citation>
    <scope>IDENTIFICATION OF PROBABLE FRAMESHIFT</scope>
</reference>
<name>RRFC_DAUCA</name>
<accession>P37706</accession>
<keyword id="KW-0150">Chloroplast</keyword>
<keyword id="KW-0175">Coiled coil</keyword>
<keyword id="KW-0934">Plastid</keyword>
<keyword id="KW-0648">Protein biosynthesis</keyword>
<keyword id="KW-0809">Transit peptide</keyword>
<feature type="transit peptide" description="Chloroplast" evidence="1">
    <location>
        <begin position="1" status="less than"/>
        <end position="34"/>
    </location>
</feature>
<feature type="chain" id="PRO_0000031084" description="Ribosome-recycling factor, chloroplastic">
    <location>
        <begin position="35"/>
        <end position="227"/>
    </location>
</feature>
<feature type="coiled-coil region" evidence="2">
    <location>
        <begin position="167"/>
        <end position="212"/>
    </location>
</feature>
<feature type="non-terminal residue">
    <location>
        <position position="1"/>
    </location>
</feature>
<protein>
    <recommendedName>
        <fullName>Ribosome-recycling factor, chloroplastic</fullName>
        <shortName>RRF</shortName>
    </recommendedName>
    <alternativeName>
        <fullName>Nuclear located protein D2</fullName>
    </alternativeName>
    <alternativeName>
        <fullName>Ribosome-releasing factor, chloroplastic</fullName>
    </alternativeName>
</protein>
<comment type="function">
    <text evidence="1">Responsible for the release of ribosomes from messenger RNA at the termination of chloroplastic protein biosynthesis.</text>
</comment>
<comment type="subcellular location">
    <subcellularLocation>
        <location evidence="1">Plastid</location>
        <location evidence="1">Chloroplast</location>
    </subcellularLocation>
</comment>
<comment type="similarity">
    <text evidence="3">Belongs to the RRF family.</text>
</comment>
<comment type="caution">
    <text evidence="3">Was originally (Ref.1) submitted as a nuclear protein when it seems to be chloroplastic (By similarity with the spinach sequence).</text>
</comment>
<comment type="sequence caution" evidence="3">
    <conflict type="frameshift">
        <sequence resource="EMBL-CDS" id="CAA51077"/>
    </conflict>
</comment>